<proteinExistence type="evidence at transcript level"/>
<feature type="chain" id="PRO_0000325970" description="Transmembrane protein 208">
    <location>
        <begin position="1"/>
        <end position="175"/>
    </location>
</feature>
<feature type="transmembrane region" description="Helical" evidence="2">
    <location>
        <begin position="25"/>
        <end position="45"/>
    </location>
</feature>
<feature type="transmembrane region" description="Helical" evidence="2">
    <location>
        <begin position="51"/>
        <end position="68"/>
    </location>
</feature>
<feature type="transmembrane region" description="Helical" evidence="2">
    <location>
        <begin position="105"/>
        <end position="126"/>
    </location>
</feature>
<feature type="region of interest" description="Disordered" evidence="3">
    <location>
        <begin position="152"/>
        <end position="175"/>
    </location>
</feature>
<feature type="compositionally biased region" description="Basic residues" evidence="3">
    <location>
        <begin position="162"/>
        <end position="175"/>
    </location>
</feature>
<organism>
    <name type="scientific">Danio rerio</name>
    <name type="common">Zebrafish</name>
    <name type="synonym">Brachydanio rerio</name>
    <dbReference type="NCBI Taxonomy" id="7955"/>
    <lineage>
        <taxon>Eukaryota</taxon>
        <taxon>Metazoa</taxon>
        <taxon>Chordata</taxon>
        <taxon>Craniata</taxon>
        <taxon>Vertebrata</taxon>
        <taxon>Euteleostomi</taxon>
        <taxon>Actinopterygii</taxon>
        <taxon>Neopterygii</taxon>
        <taxon>Teleostei</taxon>
        <taxon>Ostariophysi</taxon>
        <taxon>Cypriniformes</taxon>
        <taxon>Danionidae</taxon>
        <taxon>Danioninae</taxon>
        <taxon>Danio</taxon>
    </lineage>
</organism>
<sequence length="175" mass="20034">MAPKGKVGTKGKKQIHEENQDTLKFYSRIILGANAIYIAVNLLLFYNSSSFWTWFSLMFAVAVYVGSYRSMSAMAKPAFAEDGSLLDGGIDLNMEQGMAEHLKDVILLTAIVQVLSTLSSYFWYLWLLAPARALHLLWVNFLGPWFSADSQAAPEENEKNDKKQRRQERRQMRRF</sequence>
<gene>
    <name type="primary">tmem208</name>
    <name type="ORF">zgc:77041</name>
</gene>
<evidence type="ECO:0000250" key="1">
    <source>
        <dbReference type="UniProtKB" id="Q9BTX3"/>
    </source>
</evidence>
<evidence type="ECO:0000255" key="2"/>
<evidence type="ECO:0000256" key="3">
    <source>
        <dbReference type="SAM" id="MobiDB-lite"/>
    </source>
</evidence>
<evidence type="ECO:0000305" key="4"/>
<accession>Q6NYP0</accession>
<dbReference type="EMBL" id="BC066516">
    <property type="protein sequence ID" value="AAH66516.1"/>
    <property type="molecule type" value="mRNA"/>
</dbReference>
<dbReference type="EMBL" id="BC124418">
    <property type="protein sequence ID" value="AAI24419.1"/>
    <property type="molecule type" value="mRNA"/>
</dbReference>
<dbReference type="RefSeq" id="NP_996983.1">
    <property type="nucleotide sequence ID" value="NM_207100.3"/>
</dbReference>
<dbReference type="SMR" id="Q6NYP0"/>
<dbReference type="FunCoup" id="Q6NYP0">
    <property type="interactions" value="797"/>
</dbReference>
<dbReference type="STRING" id="7955.ENSDARP00000089483"/>
<dbReference type="PaxDb" id="7955-ENSDARP00000089483"/>
<dbReference type="Ensembl" id="ENSDART00000098712">
    <property type="protein sequence ID" value="ENSDARP00000089483"/>
    <property type="gene ID" value="ENSDARG00000068291"/>
</dbReference>
<dbReference type="GeneID" id="404632"/>
<dbReference type="KEGG" id="dre:404632"/>
<dbReference type="AGR" id="ZFIN:ZDB-GENE-040426-2523"/>
<dbReference type="CTD" id="29100"/>
<dbReference type="ZFIN" id="ZDB-GENE-040426-2523">
    <property type="gene designation" value="tmem208"/>
</dbReference>
<dbReference type="eggNOG" id="KOG3269">
    <property type="taxonomic scope" value="Eukaryota"/>
</dbReference>
<dbReference type="HOGENOM" id="CLU_094308_3_0_1"/>
<dbReference type="InParanoid" id="Q6NYP0"/>
<dbReference type="OMA" id="PIRAGWM"/>
<dbReference type="OrthoDB" id="10012212at2759"/>
<dbReference type="PhylomeDB" id="Q6NYP0"/>
<dbReference type="TreeFam" id="TF318118"/>
<dbReference type="PRO" id="PR:Q6NYP0"/>
<dbReference type="Proteomes" id="UP000000437">
    <property type="component" value="Alternate scaffold 7"/>
</dbReference>
<dbReference type="Proteomes" id="UP000000437">
    <property type="component" value="Chromosome 7"/>
</dbReference>
<dbReference type="Bgee" id="ENSDARG00000068291">
    <property type="expression patterns" value="Expressed in liver and 27 other cell types or tissues"/>
</dbReference>
<dbReference type="GO" id="GO:0005789">
    <property type="term" value="C:endoplasmic reticulum membrane"/>
    <property type="evidence" value="ECO:0000250"/>
    <property type="project" value="UniProtKB"/>
</dbReference>
<dbReference type="GO" id="GO:0043231">
    <property type="term" value="C:intracellular membrane-bounded organelle"/>
    <property type="evidence" value="ECO:0000318"/>
    <property type="project" value="GO_Central"/>
</dbReference>
<dbReference type="GO" id="GO:0005773">
    <property type="term" value="C:vacuole"/>
    <property type="evidence" value="ECO:0007669"/>
    <property type="project" value="GOC"/>
</dbReference>
<dbReference type="GO" id="GO:0006914">
    <property type="term" value="P:autophagy"/>
    <property type="evidence" value="ECO:0007669"/>
    <property type="project" value="UniProtKB-KW"/>
</dbReference>
<dbReference type="GO" id="GO:0006624">
    <property type="term" value="P:vacuolar protein processing"/>
    <property type="evidence" value="ECO:0000318"/>
    <property type="project" value="GO_Central"/>
</dbReference>
<dbReference type="InterPro" id="IPR008506">
    <property type="entry name" value="SND2/TMEM208"/>
</dbReference>
<dbReference type="PANTHER" id="PTHR13505">
    <property type="entry name" value="TRANSMEMBRANE PROTEIN 208"/>
    <property type="match status" value="1"/>
</dbReference>
<dbReference type="PANTHER" id="PTHR13505:SF7">
    <property type="entry name" value="TRANSMEMBRANE PROTEIN 208"/>
    <property type="match status" value="1"/>
</dbReference>
<dbReference type="Pfam" id="PF05620">
    <property type="entry name" value="TMEM208_SND2"/>
    <property type="match status" value="1"/>
</dbReference>
<keyword id="KW-0072">Autophagy</keyword>
<keyword id="KW-0256">Endoplasmic reticulum</keyword>
<keyword id="KW-0472">Membrane</keyword>
<keyword id="KW-1185">Reference proteome</keyword>
<keyword id="KW-0812">Transmembrane</keyword>
<keyword id="KW-1133">Transmembrane helix</keyword>
<reference key="1">
    <citation type="submission" date="2004-02" db="EMBL/GenBank/DDBJ databases">
        <authorList>
            <consortium name="NIH - Zebrafish Gene Collection (ZGC) project"/>
        </authorList>
    </citation>
    <scope>NUCLEOTIDE SEQUENCE [LARGE SCALE MRNA]</scope>
    <source>
        <tissue>Kidney</tissue>
        <tissue>Ovary</tissue>
    </source>
</reference>
<comment type="function">
    <text evidence="1">May function as a negative regulator of endoplasmic reticulum-stress induced autophagy.</text>
</comment>
<comment type="subcellular location">
    <subcellularLocation>
        <location evidence="1">Endoplasmic reticulum membrane</location>
        <topology evidence="2">Multi-pass membrane protein</topology>
    </subcellularLocation>
</comment>
<comment type="similarity">
    <text evidence="4">Belongs to the TMEM208 family.</text>
</comment>
<name>TM208_DANRE</name>
<protein>
    <recommendedName>
        <fullName>Transmembrane protein 208</fullName>
    </recommendedName>
</protein>